<gene>
    <name evidence="1" type="primary">hisC</name>
    <name type="ordered locus">LBL_2212</name>
</gene>
<keyword id="KW-0028">Amino-acid biosynthesis</keyword>
<keyword id="KW-0032">Aminotransferase</keyword>
<keyword id="KW-0368">Histidine biosynthesis</keyword>
<keyword id="KW-0663">Pyridoxal phosphate</keyword>
<keyword id="KW-0808">Transferase</keyword>
<sequence>MIQFQPVLGSLKSYEAGKPIELVVREFGIDPDQIIKLGSNENPFGCAQPVVEAVQKAASKMPYYPDDSYLELKTALASKFDLTPDRIILGNGSDQVLDFACRCVLGPGDSILINRITFAMYRIYALQCGAKVHSTETVLHDLNAFLDLAKSIRPKIIFLCTPSNPIGDALFKSDVYDFLRQIPSNTLVVIDAAYMEFGKKKDSNTFISAKEVTDLFPNVFYTGTFSKAYGLGGMRIGYGIGSKELISNLYKMRPPFNVANLSALAATEALKNESHVESYLDNNLKEMKRYEKFAAEQSVEFIDSYANFITFFARKRGKSSTEISQSLLKQGIILRNLRSYDLNAIRITIGKPQQNDRVLTALNQEFS</sequence>
<proteinExistence type="inferred from homology"/>
<reference key="1">
    <citation type="journal article" date="2006" name="Proc. Natl. Acad. Sci. U.S.A.">
        <title>Genome reduction in Leptospira borgpetersenii reflects limited transmission potential.</title>
        <authorList>
            <person name="Bulach D.M."/>
            <person name="Zuerner R.L."/>
            <person name="Wilson P."/>
            <person name="Seemann T."/>
            <person name="McGrath A."/>
            <person name="Cullen P.A."/>
            <person name="Davis J."/>
            <person name="Johnson M."/>
            <person name="Kuczek E."/>
            <person name="Alt D.P."/>
            <person name="Peterson-Burch B."/>
            <person name="Coppel R.L."/>
            <person name="Rood J.I."/>
            <person name="Davies J.K."/>
            <person name="Adler B."/>
        </authorList>
    </citation>
    <scope>NUCLEOTIDE SEQUENCE [LARGE SCALE GENOMIC DNA]</scope>
    <source>
        <strain>L550</strain>
    </source>
</reference>
<dbReference type="EC" id="2.6.1.9" evidence="1"/>
<dbReference type="EMBL" id="CP000348">
    <property type="protein sequence ID" value="ABJ79620.1"/>
    <property type="molecule type" value="Genomic_DNA"/>
</dbReference>
<dbReference type="RefSeq" id="WP_002751653.1">
    <property type="nucleotide sequence ID" value="NC_008508.1"/>
</dbReference>
<dbReference type="SMR" id="Q04Z75"/>
<dbReference type="KEGG" id="lbl:LBL_2212"/>
<dbReference type="HOGENOM" id="CLU_017584_3_3_12"/>
<dbReference type="UniPathway" id="UPA00031">
    <property type="reaction ID" value="UER00012"/>
</dbReference>
<dbReference type="GO" id="GO:0004400">
    <property type="term" value="F:histidinol-phosphate transaminase activity"/>
    <property type="evidence" value="ECO:0007669"/>
    <property type="project" value="UniProtKB-UniRule"/>
</dbReference>
<dbReference type="GO" id="GO:0030170">
    <property type="term" value="F:pyridoxal phosphate binding"/>
    <property type="evidence" value="ECO:0007669"/>
    <property type="project" value="InterPro"/>
</dbReference>
<dbReference type="GO" id="GO:0000105">
    <property type="term" value="P:L-histidine biosynthetic process"/>
    <property type="evidence" value="ECO:0007669"/>
    <property type="project" value="UniProtKB-UniRule"/>
</dbReference>
<dbReference type="CDD" id="cd00609">
    <property type="entry name" value="AAT_like"/>
    <property type="match status" value="1"/>
</dbReference>
<dbReference type="Gene3D" id="3.90.1150.10">
    <property type="entry name" value="Aspartate Aminotransferase, domain 1"/>
    <property type="match status" value="1"/>
</dbReference>
<dbReference type="Gene3D" id="3.40.640.10">
    <property type="entry name" value="Type I PLP-dependent aspartate aminotransferase-like (Major domain)"/>
    <property type="match status" value="1"/>
</dbReference>
<dbReference type="HAMAP" id="MF_01023">
    <property type="entry name" value="HisC_aminotrans_2"/>
    <property type="match status" value="1"/>
</dbReference>
<dbReference type="InterPro" id="IPR001917">
    <property type="entry name" value="Aminotrans_II_pyridoxalP_BS"/>
</dbReference>
<dbReference type="InterPro" id="IPR004839">
    <property type="entry name" value="Aminotransferase_I/II_large"/>
</dbReference>
<dbReference type="InterPro" id="IPR005861">
    <property type="entry name" value="HisP_aminotrans"/>
</dbReference>
<dbReference type="InterPro" id="IPR015424">
    <property type="entry name" value="PyrdxlP-dep_Trfase"/>
</dbReference>
<dbReference type="InterPro" id="IPR015421">
    <property type="entry name" value="PyrdxlP-dep_Trfase_major"/>
</dbReference>
<dbReference type="InterPro" id="IPR015422">
    <property type="entry name" value="PyrdxlP-dep_Trfase_small"/>
</dbReference>
<dbReference type="NCBIfam" id="TIGR01141">
    <property type="entry name" value="hisC"/>
    <property type="match status" value="1"/>
</dbReference>
<dbReference type="PANTHER" id="PTHR42885:SF2">
    <property type="entry name" value="HISTIDINOL-PHOSPHATE AMINOTRANSFERASE"/>
    <property type="match status" value="1"/>
</dbReference>
<dbReference type="PANTHER" id="PTHR42885">
    <property type="entry name" value="HISTIDINOL-PHOSPHATE AMINOTRANSFERASE-RELATED"/>
    <property type="match status" value="1"/>
</dbReference>
<dbReference type="Pfam" id="PF00155">
    <property type="entry name" value="Aminotran_1_2"/>
    <property type="match status" value="1"/>
</dbReference>
<dbReference type="SUPFAM" id="SSF53383">
    <property type="entry name" value="PLP-dependent transferases"/>
    <property type="match status" value="1"/>
</dbReference>
<dbReference type="PROSITE" id="PS00599">
    <property type="entry name" value="AA_TRANSFER_CLASS_2"/>
    <property type="match status" value="1"/>
</dbReference>
<organism>
    <name type="scientific">Leptospira borgpetersenii serovar Hardjo-bovis (strain L550)</name>
    <dbReference type="NCBI Taxonomy" id="355276"/>
    <lineage>
        <taxon>Bacteria</taxon>
        <taxon>Pseudomonadati</taxon>
        <taxon>Spirochaetota</taxon>
        <taxon>Spirochaetia</taxon>
        <taxon>Leptospirales</taxon>
        <taxon>Leptospiraceae</taxon>
        <taxon>Leptospira</taxon>
    </lineage>
</organism>
<accession>Q04Z75</accession>
<evidence type="ECO:0000255" key="1">
    <source>
        <dbReference type="HAMAP-Rule" id="MF_01023"/>
    </source>
</evidence>
<name>HIS8_LEPBL</name>
<comment type="catalytic activity">
    <reaction evidence="1">
        <text>L-histidinol phosphate + 2-oxoglutarate = 3-(imidazol-4-yl)-2-oxopropyl phosphate + L-glutamate</text>
        <dbReference type="Rhea" id="RHEA:23744"/>
        <dbReference type="ChEBI" id="CHEBI:16810"/>
        <dbReference type="ChEBI" id="CHEBI:29985"/>
        <dbReference type="ChEBI" id="CHEBI:57766"/>
        <dbReference type="ChEBI" id="CHEBI:57980"/>
        <dbReference type="EC" id="2.6.1.9"/>
    </reaction>
</comment>
<comment type="cofactor">
    <cofactor evidence="1">
        <name>pyridoxal 5'-phosphate</name>
        <dbReference type="ChEBI" id="CHEBI:597326"/>
    </cofactor>
</comment>
<comment type="pathway">
    <text evidence="1">Amino-acid biosynthesis; L-histidine biosynthesis; L-histidine from 5-phospho-alpha-D-ribose 1-diphosphate: step 7/9.</text>
</comment>
<comment type="subunit">
    <text evidence="1">Homodimer.</text>
</comment>
<comment type="similarity">
    <text evidence="1">Belongs to the class-II pyridoxal-phosphate-dependent aminotransferase family. Histidinol-phosphate aminotransferase subfamily.</text>
</comment>
<feature type="chain" id="PRO_0000319769" description="Histidinol-phosphate aminotransferase">
    <location>
        <begin position="1"/>
        <end position="367"/>
    </location>
</feature>
<feature type="modified residue" description="N6-(pyridoxal phosphate)lysine" evidence="1">
    <location>
        <position position="227"/>
    </location>
</feature>
<protein>
    <recommendedName>
        <fullName evidence="1">Histidinol-phosphate aminotransferase</fullName>
        <ecNumber evidence="1">2.6.1.9</ecNumber>
    </recommendedName>
    <alternativeName>
        <fullName evidence="1">Imidazole acetol-phosphate transaminase</fullName>
    </alternativeName>
</protein>